<geneLocation type="chloroplast"/>
<organism>
    <name type="scientific">Ranunculus macranthus</name>
    <name type="common">Large buttercup</name>
    <dbReference type="NCBI Taxonomy" id="334596"/>
    <lineage>
        <taxon>Eukaryota</taxon>
        <taxon>Viridiplantae</taxon>
        <taxon>Streptophyta</taxon>
        <taxon>Embryophyta</taxon>
        <taxon>Tracheophyta</taxon>
        <taxon>Spermatophyta</taxon>
        <taxon>Magnoliopsida</taxon>
        <taxon>Ranunculales</taxon>
        <taxon>Ranunculaceae</taxon>
        <taxon>Ranunculoideae</taxon>
        <taxon>Ranunculeae</taxon>
        <taxon>Ranunculus</taxon>
    </lineage>
</organism>
<reference key="1">
    <citation type="journal article" date="2007" name="BMC Genomics">
        <title>Comparative chloroplast genomics: analyses including new sequences from the angiosperms Nuphar advena and Ranunculus macranthus.</title>
        <authorList>
            <person name="Raubeson L.A."/>
            <person name="Peery R."/>
            <person name="Chumley T.W."/>
            <person name="Dziubek C."/>
            <person name="Fourcade H.M."/>
            <person name="Boore J.L."/>
            <person name="Jansen R.K."/>
        </authorList>
    </citation>
    <scope>NUCLEOTIDE SEQUENCE [LARGE SCALE GENOMIC DNA]</scope>
</reference>
<gene>
    <name type="primary">ndhG</name>
</gene>
<comment type="function">
    <text evidence="1">NDH shuttles electrons from NAD(P)H:plastoquinone, via FMN and iron-sulfur (Fe-S) centers, to quinones in the photosynthetic chain and possibly in a chloroplast respiratory chain. The immediate electron acceptor for the enzyme in this species is believed to be plastoquinone. Couples the redox reaction to proton translocation, and thus conserves the redox energy in a proton gradient (By similarity).</text>
</comment>
<comment type="catalytic activity">
    <reaction>
        <text>a plastoquinone + NADH + (n+1) H(+)(in) = a plastoquinol + NAD(+) + n H(+)(out)</text>
        <dbReference type="Rhea" id="RHEA:42608"/>
        <dbReference type="Rhea" id="RHEA-COMP:9561"/>
        <dbReference type="Rhea" id="RHEA-COMP:9562"/>
        <dbReference type="ChEBI" id="CHEBI:15378"/>
        <dbReference type="ChEBI" id="CHEBI:17757"/>
        <dbReference type="ChEBI" id="CHEBI:57540"/>
        <dbReference type="ChEBI" id="CHEBI:57945"/>
        <dbReference type="ChEBI" id="CHEBI:62192"/>
    </reaction>
</comment>
<comment type="catalytic activity">
    <reaction>
        <text>a plastoquinone + NADPH + (n+1) H(+)(in) = a plastoquinol + NADP(+) + n H(+)(out)</text>
        <dbReference type="Rhea" id="RHEA:42612"/>
        <dbReference type="Rhea" id="RHEA-COMP:9561"/>
        <dbReference type="Rhea" id="RHEA-COMP:9562"/>
        <dbReference type="ChEBI" id="CHEBI:15378"/>
        <dbReference type="ChEBI" id="CHEBI:17757"/>
        <dbReference type="ChEBI" id="CHEBI:57783"/>
        <dbReference type="ChEBI" id="CHEBI:58349"/>
        <dbReference type="ChEBI" id="CHEBI:62192"/>
    </reaction>
</comment>
<comment type="subunit">
    <text evidence="1">NDH is composed of at least 16 different subunits, 5 of which are encoded in the nucleus.</text>
</comment>
<comment type="subcellular location">
    <subcellularLocation>
        <location evidence="1">Plastid</location>
        <location evidence="1">Chloroplast thylakoid membrane</location>
        <topology evidence="1">Multi-pass membrane protein</topology>
    </subcellularLocation>
</comment>
<comment type="similarity">
    <text evidence="3">Belongs to the complex I subunit 6 family.</text>
</comment>
<proteinExistence type="inferred from homology"/>
<accession>A1XGT8</accession>
<evidence type="ECO:0000250" key="1"/>
<evidence type="ECO:0000255" key="2"/>
<evidence type="ECO:0000305" key="3"/>
<sequence>MDLPGPIHDFLLVFLGLGFIMGGLGVVLLTNPIFSAFSLGLVLVCTSLFYTPSNSHFVAAAQLLIYVGAINVLIIFAVMFMNGSEYYSDFHLWTVGDGVTSLVCTSIFVSLITTIPDTSWYGIVWTTRSNQIIEQDLINNSQQIGIHLSTDFFLPFELISIILLVALIGAISMARQY</sequence>
<dbReference type="EC" id="7.1.1.-"/>
<dbReference type="EMBL" id="DQ359689">
    <property type="protein sequence ID" value="ABC70806.1"/>
    <property type="molecule type" value="Genomic_DNA"/>
</dbReference>
<dbReference type="RefSeq" id="YP_001004236.1">
    <property type="nucleotide sequence ID" value="NC_008796.1"/>
</dbReference>
<dbReference type="SMR" id="A1XGT8"/>
<dbReference type="GeneID" id="4712188"/>
<dbReference type="GO" id="GO:0009535">
    <property type="term" value="C:chloroplast thylakoid membrane"/>
    <property type="evidence" value="ECO:0007669"/>
    <property type="project" value="UniProtKB-SubCell"/>
</dbReference>
<dbReference type="GO" id="GO:0008137">
    <property type="term" value="F:NADH dehydrogenase (ubiquinone) activity"/>
    <property type="evidence" value="ECO:0007669"/>
    <property type="project" value="InterPro"/>
</dbReference>
<dbReference type="GO" id="GO:0048038">
    <property type="term" value="F:quinone binding"/>
    <property type="evidence" value="ECO:0007669"/>
    <property type="project" value="UniProtKB-KW"/>
</dbReference>
<dbReference type="FunFam" id="1.20.120.1200:FF:000002">
    <property type="entry name" value="NAD(P)H-quinone oxidoreductase subunit 6, chloroplastic"/>
    <property type="match status" value="1"/>
</dbReference>
<dbReference type="Gene3D" id="1.20.120.1200">
    <property type="entry name" value="NADH-ubiquinone/plastoquinone oxidoreductase chain 6, subunit NuoJ"/>
    <property type="match status" value="1"/>
</dbReference>
<dbReference type="InterPro" id="IPR050290">
    <property type="entry name" value="NAD(P)H-Q_Oxidoreduct_6"/>
</dbReference>
<dbReference type="InterPro" id="IPR001457">
    <property type="entry name" value="NADH_UbQ/plastoQ_OxRdtase_su6"/>
</dbReference>
<dbReference type="InterPro" id="IPR042106">
    <property type="entry name" value="Nuo/plastoQ_OxRdtase_6_NuoJ"/>
</dbReference>
<dbReference type="PANTHER" id="PTHR48479">
    <property type="entry name" value="NAD(P)H-QUINONE OXIDOREDUCTASE SUBUNIT 6, CHLOROPLASTIC"/>
    <property type="match status" value="1"/>
</dbReference>
<dbReference type="PANTHER" id="PTHR48479:SF1">
    <property type="entry name" value="NAD(P)H-QUINONE OXIDOREDUCTASE SUBUNIT 6, CHLOROPLASTIC"/>
    <property type="match status" value="1"/>
</dbReference>
<dbReference type="Pfam" id="PF00499">
    <property type="entry name" value="Oxidored_q3"/>
    <property type="match status" value="1"/>
</dbReference>
<keyword id="KW-0150">Chloroplast</keyword>
<keyword id="KW-0472">Membrane</keyword>
<keyword id="KW-0520">NAD</keyword>
<keyword id="KW-0521">NADP</keyword>
<keyword id="KW-0934">Plastid</keyword>
<keyword id="KW-0618">Plastoquinone</keyword>
<keyword id="KW-0874">Quinone</keyword>
<keyword id="KW-0793">Thylakoid</keyword>
<keyword id="KW-1278">Translocase</keyword>
<keyword id="KW-0812">Transmembrane</keyword>
<keyword id="KW-1133">Transmembrane helix</keyword>
<keyword id="KW-0813">Transport</keyword>
<protein>
    <recommendedName>
        <fullName>NAD(P)H-quinone oxidoreductase subunit 6, chloroplastic</fullName>
        <ecNumber>7.1.1.-</ecNumber>
    </recommendedName>
    <alternativeName>
        <fullName>NAD(P)H dehydrogenase subunit 6</fullName>
    </alternativeName>
    <alternativeName>
        <fullName>NADH-plastoquinone oxidoreductase subunit 6</fullName>
    </alternativeName>
</protein>
<feature type="chain" id="PRO_0000360290" description="NAD(P)H-quinone oxidoreductase subunit 6, chloroplastic">
    <location>
        <begin position="1"/>
        <end position="177"/>
    </location>
</feature>
<feature type="transmembrane region" description="Helical" evidence="2">
    <location>
        <begin position="10"/>
        <end position="30"/>
    </location>
</feature>
<feature type="transmembrane region" description="Helical" evidence="2">
    <location>
        <begin position="32"/>
        <end position="52"/>
    </location>
</feature>
<feature type="transmembrane region" description="Helical" evidence="2">
    <location>
        <begin position="61"/>
        <end position="81"/>
    </location>
</feature>
<feature type="transmembrane region" description="Helical" evidence="2">
    <location>
        <begin position="92"/>
        <end position="112"/>
    </location>
</feature>
<feature type="transmembrane region" description="Helical" evidence="2">
    <location>
        <begin position="152"/>
        <end position="172"/>
    </location>
</feature>
<name>NU6C_RANMC</name>